<accession>B8HG55</accession>
<organism>
    <name type="scientific">Pseudarthrobacter chlorophenolicus (strain ATCC 700700 / DSM 12829 / CIP 107037 / JCM 12360 / KCTC 9906 / NCIMB 13794 / A6)</name>
    <name type="common">Arthrobacter chlorophenolicus</name>
    <dbReference type="NCBI Taxonomy" id="452863"/>
    <lineage>
        <taxon>Bacteria</taxon>
        <taxon>Bacillati</taxon>
        <taxon>Actinomycetota</taxon>
        <taxon>Actinomycetes</taxon>
        <taxon>Micrococcales</taxon>
        <taxon>Micrococcaceae</taxon>
        <taxon>Pseudarthrobacter</taxon>
    </lineage>
</organism>
<protein>
    <recommendedName>
        <fullName evidence="1">Ribosome-binding factor A</fullName>
    </recommendedName>
</protein>
<evidence type="ECO:0000255" key="1">
    <source>
        <dbReference type="HAMAP-Rule" id="MF_00003"/>
    </source>
</evidence>
<evidence type="ECO:0000256" key="2">
    <source>
        <dbReference type="SAM" id="MobiDB-lite"/>
    </source>
</evidence>
<comment type="function">
    <text evidence="1">One of several proteins that assist in the late maturation steps of the functional core of the 30S ribosomal subunit. Associates with free 30S ribosomal subunits (but not with 30S subunits that are part of 70S ribosomes or polysomes). Required for efficient processing of 16S rRNA. May interact with the 5'-terminal helix region of 16S rRNA.</text>
</comment>
<comment type="subunit">
    <text evidence="1">Monomer. Binds 30S ribosomal subunits, but not 50S ribosomal subunits or 70S ribosomes.</text>
</comment>
<comment type="subcellular location">
    <subcellularLocation>
        <location evidence="1">Cytoplasm</location>
    </subcellularLocation>
</comment>
<comment type="similarity">
    <text evidence="1">Belongs to the RbfA family.</text>
</comment>
<feature type="chain" id="PRO_1000193224" description="Ribosome-binding factor A">
    <location>
        <begin position="1"/>
        <end position="175"/>
    </location>
</feature>
<feature type="region of interest" description="Disordered" evidence="2">
    <location>
        <begin position="125"/>
        <end position="175"/>
    </location>
</feature>
<feature type="compositionally biased region" description="Basic and acidic residues" evidence="2">
    <location>
        <begin position="128"/>
        <end position="139"/>
    </location>
</feature>
<feature type="compositionally biased region" description="Acidic residues" evidence="2">
    <location>
        <begin position="140"/>
        <end position="165"/>
    </location>
</feature>
<feature type="compositionally biased region" description="Basic and acidic residues" evidence="2">
    <location>
        <begin position="166"/>
        <end position="175"/>
    </location>
</feature>
<gene>
    <name evidence="1" type="primary">rbfA</name>
    <name type="ordered locus">Achl_1427</name>
</gene>
<proteinExistence type="inferred from homology"/>
<dbReference type="EMBL" id="CP001341">
    <property type="protein sequence ID" value="ACL39417.1"/>
    <property type="molecule type" value="Genomic_DNA"/>
</dbReference>
<dbReference type="RefSeq" id="WP_015936640.1">
    <property type="nucleotide sequence ID" value="NC_011886.1"/>
</dbReference>
<dbReference type="SMR" id="B8HG55"/>
<dbReference type="STRING" id="452863.Achl_1427"/>
<dbReference type="KEGG" id="ach:Achl_1427"/>
<dbReference type="eggNOG" id="COG0858">
    <property type="taxonomic scope" value="Bacteria"/>
</dbReference>
<dbReference type="HOGENOM" id="CLU_089475_0_0_11"/>
<dbReference type="OrthoDB" id="307788at2"/>
<dbReference type="Proteomes" id="UP000002505">
    <property type="component" value="Chromosome"/>
</dbReference>
<dbReference type="GO" id="GO:0005829">
    <property type="term" value="C:cytosol"/>
    <property type="evidence" value="ECO:0007669"/>
    <property type="project" value="TreeGrafter"/>
</dbReference>
<dbReference type="GO" id="GO:0043024">
    <property type="term" value="F:ribosomal small subunit binding"/>
    <property type="evidence" value="ECO:0007669"/>
    <property type="project" value="TreeGrafter"/>
</dbReference>
<dbReference type="GO" id="GO:0030490">
    <property type="term" value="P:maturation of SSU-rRNA"/>
    <property type="evidence" value="ECO:0007669"/>
    <property type="project" value="UniProtKB-UniRule"/>
</dbReference>
<dbReference type="Gene3D" id="3.30.300.20">
    <property type="match status" value="1"/>
</dbReference>
<dbReference type="HAMAP" id="MF_00003">
    <property type="entry name" value="RbfA"/>
    <property type="match status" value="1"/>
</dbReference>
<dbReference type="InterPro" id="IPR015946">
    <property type="entry name" value="KH_dom-like_a/b"/>
</dbReference>
<dbReference type="InterPro" id="IPR000238">
    <property type="entry name" value="RbfA"/>
</dbReference>
<dbReference type="InterPro" id="IPR023799">
    <property type="entry name" value="RbfA_dom_sf"/>
</dbReference>
<dbReference type="InterPro" id="IPR020053">
    <property type="entry name" value="Ribosome-bd_factorA_CS"/>
</dbReference>
<dbReference type="NCBIfam" id="TIGR00082">
    <property type="entry name" value="rbfA"/>
    <property type="match status" value="1"/>
</dbReference>
<dbReference type="PANTHER" id="PTHR33515">
    <property type="entry name" value="RIBOSOME-BINDING FACTOR A, CHLOROPLASTIC-RELATED"/>
    <property type="match status" value="1"/>
</dbReference>
<dbReference type="PANTHER" id="PTHR33515:SF1">
    <property type="entry name" value="RIBOSOME-BINDING FACTOR A, CHLOROPLASTIC-RELATED"/>
    <property type="match status" value="1"/>
</dbReference>
<dbReference type="Pfam" id="PF02033">
    <property type="entry name" value="RBFA"/>
    <property type="match status" value="1"/>
</dbReference>
<dbReference type="SUPFAM" id="SSF89919">
    <property type="entry name" value="Ribosome-binding factor A, RbfA"/>
    <property type="match status" value="1"/>
</dbReference>
<dbReference type="PROSITE" id="PS01319">
    <property type="entry name" value="RBFA"/>
    <property type="match status" value="1"/>
</dbReference>
<name>RBFA_PSECP</name>
<sequence length="175" mass="18955">MADPARAAKLAQRIKVVVAEALGRKVKDPRLEGVTVTDARVTNDLQHATVYYTVFGDETAHADAAKGLEKAKGVLRQEVGRNITVRLTPTLEFVADQIPVVASNLEELLREARKRDAEVAALAATAKHAGEADPYKSDAPEDVDIDEDDFDEEDIDLAGDDDIDEDANKDADSSK</sequence>
<keyword id="KW-0963">Cytoplasm</keyword>
<keyword id="KW-0690">Ribosome biogenesis</keyword>
<reference key="1">
    <citation type="submission" date="2009-01" db="EMBL/GenBank/DDBJ databases">
        <title>Complete sequence of chromosome of Arthrobacter chlorophenolicus A6.</title>
        <authorList>
            <consortium name="US DOE Joint Genome Institute"/>
            <person name="Lucas S."/>
            <person name="Copeland A."/>
            <person name="Lapidus A."/>
            <person name="Glavina del Rio T."/>
            <person name="Tice H."/>
            <person name="Bruce D."/>
            <person name="Goodwin L."/>
            <person name="Pitluck S."/>
            <person name="Goltsman E."/>
            <person name="Clum A."/>
            <person name="Larimer F."/>
            <person name="Land M."/>
            <person name="Hauser L."/>
            <person name="Kyrpides N."/>
            <person name="Mikhailova N."/>
            <person name="Jansson J."/>
            <person name="Richardson P."/>
        </authorList>
    </citation>
    <scope>NUCLEOTIDE SEQUENCE [LARGE SCALE GENOMIC DNA]</scope>
    <source>
        <strain>ATCC 700700 / DSM 12829 / CIP 107037 / JCM 12360 / KCTC 9906 / NCIMB 13794 / A6</strain>
    </source>
</reference>